<name>TLR9_HORSE</name>
<organism evidence="17">
    <name type="scientific">Equus caballus</name>
    <name type="common">Horse</name>
    <dbReference type="NCBI Taxonomy" id="9796"/>
    <lineage>
        <taxon>Eukaryota</taxon>
        <taxon>Metazoa</taxon>
        <taxon>Chordata</taxon>
        <taxon>Craniata</taxon>
        <taxon>Vertebrata</taxon>
        <taxon>Euteleostomi</taxon>
        <taxon>Mammalia</taxon>
        <taxon>Eutheria</taxon>
        <taxon>Laurasiatheria</taxon>
        <taxon>Perissodactyla</taxon>
        <taxon>Equidae</taxon>
        <taxon>Equus</taxon>
    </lineage>
</organism>
<gene>
    <name evidence="15 17" type="primary">TLR9</name>
</gene>
<proteinExistence type="evidence at protein level"/>
<feature type="signal peptide" evidence="3">
    <location>
        <begin position="1"/>
        <end position="25"/>
    </location>
</feature>
<feature type="chain" id="PRO_5009710270" description="Toll-like receptor 9" evidence="3">
    <location>
        <begin position="26"/>
        <end position="1031"/>
    </location>
</feature>
<feature type="topological domain" description="Extracellular" evidence="16">
    <location>
        <begin position="26"/>
        <end position="817"/>
    </location>
</feature>
<feature type="transmembrane region" description="Helical" evidence="3">
    <location>
        <begin position="818"/>
        <end position="838"/>
    </location>
</feature>
<feature type="topological domain" description="Cytoplasmic" evidence="16">
    <location>
        <begin position="839"/>
        <end position="1031"/>
    </location>
</feature>
<feature type="repeat" description="LRR 1" evidence="3">
    <location>
        <begin position="62"/>
        <end position="85"/>
    </location>
</feature>
<feature type="repeat" description="LRR 2" evidence="3">
    <location>
        <begin position="87"/>
        <end position="110"/>
    </location>
</feature>
<feature type="repeat" description="LRR 3" evidence="3">
    <location>
        <begin position="122"/>
        <end position="147"/>
    </location>
</feature>
<feature type="repeat" description="LRR 4" evidence="3">
    <location>
        <begin position="150"/>
        <end position="166"/>
    </location>
</feature>
<feature type="repeat" description="LRR 5" evidence="3">
    <location>
        <begin position="167"/>
        <end position="190"/>
    </location>
</feature>
<feature type="repeat" description="LRR 6" evidence="3">
    <location>
        <begin position="198"/>
        <end position="221"/>
    </location>
</feature>
<feature type="repeat" description="LRR 7" evidence="3">
    <location>
        <begin position="223"/>
        <end position="242"/>
    </location>
</feature>
<feature type="repeat" description="LRR 8" evidence="3">
    <location>
        <begin position="243"/>
        <end position="268"/>
    </location>
</feature>
<feature type="repeat" description="LRR 9" evidence="3">
    <location>
        <begin position="283"/>
        <end position="306"/>
    </location>
</feature>
<feature type="repeat" description="LRR 10" evidence="3">
    <location>
        <begin position="308"/>
        <end position="332"/>
    </location>
</feature>
<feature type="repeat" description="LRR 11" evidence="3">
    <location>
        <begin position="333"/>
        <end position="356"/>
    </location>
</feature>
<feature type="repeat" description="LRR 12" evidence="3">
    <location>
        <begin position="363"/>
        <end position="386"/>
    </location>
</feature>
<feature type="repeat" description="LRR 13" evidence="3">
    <location>
        <begin position="390"/>
        <end position="413"/>
    </location>
</feature>
<feature type="repeat" description="LRR 14" evidence="3">
    <location>
        <begin position="414"/>
        <end position="438"/>
    </location>
</feature>
<feature type="repeat" description="LRR 15" evidence="3">
    <location>
        <begin position="470"/>
        <end position="494"/>
    </location>
</feature>
<feature type="repeat" description="LRR 16" evidence="3">
    <location>
        <begin position="496"/>
        <end position="519"/>
    </location>
</feature>
<feature type="repeat" description="LRR 17" evidence="3">
    <location>
        <begin position="520"/>
        <end position="543"/>
    </location>
</feature>
<feature type="repeat" description="LRR 18" evidence="3">
    <location>
        <begin position="545"/>
        <end position="567"/>
    </location>
</feature>
<feature type="repeat" description="LRR 19" evidence="3">
    <location>
        <begin position="574"/>
        <end position="598"/>
    </location>
</feature>
<feature type="repeat" description="LRR 20" evidence="3">
    <location>
        <begin position="600"/>
        <end position="622"/>
    </location>
</feature>
<feature type="repeat" description="LRR 21" evidence="3">
    <location>
        <begin position="627"/>
        <end position="650"/>
    </location>
</feature>
<feature type="repeat" description="LRR 22" evidence="3">
    <location>
        <begin position="652"/>
        <end position="675"/>
    </location>
</feature>
<feature type="repeat" description="LRR 23" evidence="3">
    <location>
        <begin position="676"/>
        <end position="699"/>
    </location>
</feature>
<feature type="repeat" description="LRR 24" evidence="3">
    <location>
        <begin position="701"/>
        <end position="723"/>
    </location>
</feature>
<feature type="repeat" description="LRR 25" evidence="3">
    <location>
        <begin position="724"/>
        <end position="747"/>
    </location>
</feature>
<feature type="repeat" description="LRR 26" evidence="3">
    <location>
        <begin position="749"/>
        <end position="772"/>
    </location>
</feature>
<feature type="domain" description="TIR" evidence="4">
    <location>
        <begin position="866"/>
        <end position="1011"/>
    </location>
</feature>
<feature type="binding site" evidence="13 19">
    <location>
        <begin position="47"/>
        <end position="51"/>
    </location>
    <ligand>
        <name>DNA</name>
        <dbReference type="ChEBI" id="CHEBI:16991"/>
        <note>CpG-containing DNA</note>
    </ligand>
</feature>
<feature type="binding site" evidence="13 19">
    <location>
        <begin position="72"/>
        <end position="77"/>
    </location>
    <ligand>
        <name>DNA</name>
        <dbReference type="ChEBI" id="CHEBI:16991"/>
        <note>CpG-containing DNA</note>
    </ligand>
</feature>
<feature type="binding site" evidence="13 19">
    <location>
        <begin position="95"/>
        <end position="109"/>
    </location>
    <ligand>
        <name>DNA</name>
        <dbReference type="ChEBI" id="CHEBI:16991"/>
        <note>CpG-containing DNA</note>
    </ligand>
</feature>
<feature type="binding site" evidence="13 19">
    <location>
        <position position="132"/>
    </location>
    <ligand>
        <name>DNA</name>
        <dbReference type="ChEBI" id="CHEBI:16991"/>
        <note>CpG-containing DNA</note>
    </ligand>
</feature>
<feature type="binding site" evidence="13 19">
    <location>
        <position position="152"/>
    </location>
    <ligand>
        <name>DNA</name>
        <dbReference type="ChEBI" id="CHEBI:16991"/>
        <note>CpG-containing DNA</note>
    </ligand>
</feature>
<feature type="binding site" evidence="13 19">
    <location>
        <begin position="179"/>
        <end position="181"/>
    </location>
    <ligand>
        <name>DNA</name>
        <dbReference type="ChEBI" id="CHEBI:16991"/>
        <note>CpG-containing DNA</note>
    </ligand>
</feature>
<feature type="binding site" evidence="13 19">
    <location>
        <position position="208"/>
    </location>
    <ligand>
        <name>DNA</name>
        <dbReference type="ChEBI" id="CHEBI:16991"/>
        <note>CpG-containing DNA</note>
    </ligand>
</feature>
<feature type="binding site" evidence="13 19">
    <location>
        <position position="262"/>
    </location>
    <ligand>
        <name>DNA</name>
        <dbReference type="ChEBI" id="CHEBI:16991"/>
        <note>CpG-containing DNA</note>
    </ligand>
</feature>
<feature type="lipid moiety-binding region" description="S-palmitoyl cysteine" evidence="2">
    <location>
        <position position="258"/>
    </location>
</feature>
<feature type="lipid moiety-binding region" description="S-palmitoyl cysteine" evidence="2">
    <location>
        <position position="265"/>
    </location>
</feature>
<feature type="glycosylation site" description="N-linked (GlcNAc...) asparagine" evidence="5">
    <location>
        <position position="64"/>
    </location>
</feature>
<feature type="glycosylation site" description="N-linked (GlcNAc...) asparagine" evidence="5">
    <location>
        <position position="129"/>
    </location>
</feature>
<feature type="glycosylation site" description="N-linked (GlcNAc...) asparagine" evidence="5 13 19">
    <location>
        <position position="200"/>
    </location>
</feature>
<feature type="glycosylation site" description="N-linked (GlcNAc...) asparagine" evidence="5 13 18 19 20">
    <location>
        <position position="210"/>
    </location>
</feature>
<feature type="glycosylation site" description="N-linked (GlcNAc...) asparagine" evidence="5 13 19">
    <location>
        <position position="242"/>
    </location>
</feature>
<feature type="glycosylation site" description="N-linked (GlcNAc...) asparagine" evidence="5 13 19">
    <location>
        <position position="309"/>
    </location>
</feature>
<feature type="glycosylation site" description="N-linked (GlcNAc...) asparagine" evidence="5">
    <location>
        <position position="340"/>
    </location>
</feature>
<feature type="glycosylation site" description="N-linked (GlcNAc...) asparagine" evidence="5">
    <location>
        <position position="472"/>
    </location>
</feature>
<feature type="glycosylation site" description="N-linked (GlcNAc...) asparagine" evidence="5 13 19">
    <location>
        <position position="513"/>
    </location>
</feature>
<feature type="glycosylation site" description="N-linked (GlcNAc...) asparagine" evidence="5 13 18 19 20">
    <location>
        <position position="567"/>
    </location>
</feature>
<feature type="glycosylation site" description="N-linked (GlcNAc...) asparagine" evidence="5">
    <location>
        <position position="669"/>
    </location>
</feature>
<feature type="glycosylation site" description="N-linked (GlcNAc...) asparagine" evidence="5 13 19">
    <location>
        <position position="694"/>
    </location>
</feature>
<feature type="glycosylation site" description="N-linked (GlcNAc...) asparagine" evidence="5 13 18 19 20">
    <location>
        <position position="731"/>
    </location>
</feature>
<feature type="disulfide bond" evidence="13 18 19 20">
    <location>
        <begin position="35"/>
        <end position="45"/>
    </location>
</feature>
<feature type="disulfide bond" evidence="13 18 19 20">
    <location>
        <begin position="98"/>
        <end position="110"/>
    </location>
</feature>
<feature type="disulfide bond" evidence="13 18 19 20">
    <location>
        <begin position="178"/>
        <end position="184"/>
    </location>
</feature>
<feature type="disulfide bond" evidence="13 18 19 20">
    <location>
        <begin position="255"/>
        <end position="268"/>
    </location>
</feature>
<feature type="disulfide bond" evidence="13 18 19 20">
    <location>
        <begin position="258"/>
        <end position="265"/>
    </location>
</feature>
<feature type="disulfide bond" evidence="13 18 19 20">
    <location>
        <begin position="470"/>
        <end position="500"/>
    </location>
</feature>
<feature type="disulfide bond" evidence="13 18 19 20">
    <location>
        <begin position="764"/>
        <end position="790"/>
    </location>
</feature>
<feature type="disulfide bond" evidence="13 18 20">
    <location>
        <begin position="766"/>
        <end position="809"/>
    </location>
</feature>
<feature type="mutagenesis site" description="Significantly decreased binding to agonist CpG-DNA." evidence="13">
    <original>W</original>
    <variation>A</variation>
    <location>
        <position position="47"/>
    </location>
</feature>
<feature type="mutagenesis site" description="Significantly decreased binding to agonist CpG-DNA." evidence="13">
    <original>W</original>
    <variation>A</variation>
    <location>
        <position position="96"/>
    </location>
</feature>
<feature type="mutagenesis site" description="Significantly decreased binding to agonist CpG-DNA." evidence="13">
    <original>F</original>
    <variation>A</variation>
    <location>
        <position position="108"/>
    </location>
</feature>
<feature type="turn" evidence="22">
    <location>
        <begin position="31"/>
        <end position="34"/>
    </location>
</feature>
<feature type="strand" evidence="22">
    <location>
        <begin position="35"/>
        <end position="38"/>
    </location>
</feature>
<feature type="turn" evidence="22">
    <location>
        <begin position="39"/>
        <end position="41"/>
    </location>
</feature>
<feature type="strand" evidence="22">
    <location>
        <begin position="42"/>
        <end position="44"/>
    </location>
</feature>
<feature type="strand" evidence="26">
    <location>
        <begin position="58"/>
        <end position="60"/>
    </location>
</feature>
<feature type="helix" evidence="22">
    <location>
        <begin position="62"/>
        <end position="64"/>
    </location>
</feature>
<feature type="strand" evidence="22">
    <location>
        <begin position="66"/>
        <end position="69"/>
    </location>
</feature>
<feature type="turn" evidence="26">
    <location>
        <begin position="80"/>
        <end position="85"/>
    </location>
</feature>
<feature type="strand" evidence="22">
    <location>
        <begin position="91"/>
        <end position="93"/>
    </location>
</feature>
<feature type="strand" evidence="21">
    <location>
        <begin position="96"/>
        <end position="98"/>
    </location>
</feature>
<feature type="turn" evidence="22">
    <location>
        <begin position="101"/>
        <end position="103"/>
    </location>
</feature>
<feature type="turn" evidence="22">
    <location>
        <begin position="116"/>
        <end position="121"/>
    </location>
</feature>
<feature type="strand" evidence="22">
    <location>
        <begin position="127"/>
        <end position="129"/>
    </location>
</feature>
<feature type="strand" evidence="22">
    <location>
        <begin position="147"/>
        <end position="149"/>
    </location>
</feature>
<feature type="turn" evidence="22">
    <location>
        <begin position="160"/>
        <end position="162"/>
    </location>
</feature>
<feature type="strand" evidence="22">
    <location>
        <begin position="171"/>
        <end position="173"/>
    </location>
</feature>
<feature type="strand" evidence="22">
    <location>
        <begin position="177"/>
        <end position="179"/>
    </location>
</feature>
<feature type="turn" evidence="22">
    <location>
        <begin position="192"/>
        <end position="197"/>
    </location>
</feature>
<feature type="strand" evidence="22">
    <location>
        <begin position="203"/>
        <end position="205"/>
    </location>
</feature>
<feature type="strand" evidence="22">
    <location>
        <begin position="223"/>
        <end position="226"/>
    </location>
</feature>
<feature type="helix" evidence="22">
    <location>
        <begin position="237"/>
        <end position="240"/>
    </location>
</feature>
<feature type="strand" evidence="22">
    <location>
        <begin position="247"/>
        <end position="250"/>
    </location>
</feature>
<feature type="strand" evidence="21">
    <location>
        <begin position="253"/>
        <end position="256"/>
    </location>
</feature>
<feature type="helix" evidence="22">
    <location>
        <begin position="258"/>
        <end position="260"/>
    </location>
</feature>
<feature type="turn" evidence="22">
    <location>
        <begin position="277"/>
        <end position="282"/>
    </location>
</feature>
<feature type="strand" evidence="22">
    <location>
        <begin position="288"/>
        <end position="290"/>
    </location>
</feature>
<feature type="helix" evidence="22">
    <location>
        <begin position="301"/>
        <end position="303"/>
    </location>
</feature>
<feature type="turn" evidence="22">
    <location>
        <begin position="304"/>
        <end position="306"/>
    </location>
</feature>
<feature type="strand" evidence="22">
    <location>
        <begin position="312"/>
        <end position="314"/>
    </location>
</feature>
<feature type="turn" evidence="26">
    <location>
        <begin position="320"/>
        <end position="322"/>
    </location>
</feature>
<feature type="helix" evidence="22">
    <location>
        <begin position="323"/>
        <end position="326"/>
    </location>
</feature>
<feature type="turn" evidence="22">
    <location>
        <begin position="329"/>
        <end position="332"/>
    </location>
</feature>
<feature type="strand" evidence="22">
    <location>
        <begin position="338"/>
        <end position="340"/>
    </location>
</feature>
<feature type="turn" evidence="23">
    <location>
        <begin position="347"/>
        <end position="349"/>
    </location>
</feature>
<feature type="helix" evidence="22">
    <location>
        <begin position="358"/>
        <end position="362"/>
    </location>
</feature>
<feature type="strand" evidence="22">
    <location>
        <begin position="368"/>
        <end position="370"/>
    </location>
</feature>
<feature type="strand" evidence="22">
    <location>
        <begin position="376"/>
        <end position="379"/>
    </location>
</feature>
<feature type="turn" evidence="22">
    <location>
        <begin position="381"/>
        <end position="384"/>
    </location>
</feature>
<feature type="helix" evidence="22">
    <location>
        <begin position="385"/>
        <end position="387"/>
    </location>
</feature>
<feature type="strand" evidence="22">
    <location>
        <begin position="395"/>
        <end position="397"/>
    </location>
</feature>
<feature type="helix" evidence="22">
    <location>
        <begin position="408"/>
        <end position="411"/>
    </location>
</feature>
<feature type="strand" evidence="22">
    <location>
        <begin position="419"/>
        <end position="421"/>
    </location>
</feature>
<feature type="turn" evidence="24">
    <location>
        <begin position="464"/>
        <end position="466"/>
    </location>
</feature>
<feature type="strand" evidence="23">
    <location>
        <begin position="470"/>
        <end position="474"/>
    </location>
</feature>
<feature type="strand" evidence="22">
    <location>
        <begin position="476"/>
        <end position="478"/>
    </location>
</feature>
<feature type="helix" evidence="22">
    <location>
        <begin position="489"/>
        <end position="492"/>
    </location>
</feature>
<feature type="strand" evidence="22">
    <location>
        <begin position="499"/>
        <end position="502"/>
    </location>
</feature>
<feature type="strand" evidence="21">
    <location>
        <begin position="512"/>
        <end position="514"/>
    </location>
</feature>
<feature type="turn" evidence="22">
    <location>
        <begin position="516"/>
        <end position="519"/>
    </location>
</feature>
<feature type="strand" evidence="22">
    <location>
        <begin position="525"/>
        <end position="527"/>
    </location>
</feature>
<feature type="turn" evidence="22">
    <location>
        <begin position="538"/>
        <end position="543"/>
    </location>
</feature>
<feature type="strand" evidence="22">
    <location>
        <begin position="549"/>
        <end position="551"/>
    </location>
</feature>
<feature type="helix" evidence="22">
    <location>
        <begin position="556"/>
        <end position="559"/>
    </location>
</feature>
<feature type="helix" evidence="22">
    <location>
        <begin position="569"/>
        <end position="573"/>
    </location>
</feature>
<feature type="strand" evidence="22">
    <location>
        <begin position="579"/>
        <end position="581"/>
    </location>
</feature>
<feature type="strand" evidence="22">
    <location>
        <begin position="589"/>
        <end position="591"/>
    </location>
</feature>
<feature type="strand" evidence="22">
    <location>
        <begin position="596"/>
        <end position="599"/>
    </location>
</feature>
<feature type="strand" evidence="22">
    <location>
        <begin position="602"/>
        <end position="604"/>
    </location>
</feature>
<feature type="helix" evidence="22">
    <location>
        <begin position="610"/>
        <end position="614"/>
    </location>
</feature>
<feature type="turn" evidence="22">
    <location>
        <begin position="617"/>
        <end position="625"/>
    </location>
</feature>
<feature type="strand" evidence="22">
    <location>
        <begin position="632"/>
        <end position="634"/>
    </location>
</feature>
<feature type="helix" evidence="22">
    <location>
        <begin position="645"/>
        <end position="648"/>
    </location>
</feature>
<feature type="strand" evidence="22">
    <location>
        <begin position="657"/>
        <end position="659"/>
    </location>
</feature>
<feature type="helix" evidence="22">
    <location>
        <begin position="670"/>
        <end position="675"/>
    </location>
</feature>
<feature type="strand" evidence="22">
    <location>
        <begin position="681"/>
        <end position="683"/>
    </location>
</feature>
<feature type="strand" evidence="25">
    <location>
        <begin position="690"/>
        <end position="692"/>
    </location>
</feature>
<feature type="strand" evidence="22">
    <location>
        <begin position="705"/>
        <end position="707"/>
    </location>
</feature>
<feature type="turn" evidence="22">
    <location>
        <begin position="718"/>
        <end position="723"/>
    </location>
</feature>
<feature type="strand" evidence="22">
    <location>
        <begin position="729"/>
        <end position="731"/>
    </location>
</feature>
<feature type="helix" evidence="22">
    <location>
        <begin position="742"/>
        <end position="745"/>
    </location>
</feature>
<feature type="helix" evidence="24">
    <location>
        <begin position="749"/>
        <end position="751"/>
    </location>
</feature>
<feature type="strand" evidence="22">
    <location>
        <begin position="753"/>
        <end position="756"/>
    </location>
</feature>
<feature type="helix" evidence="22">
    <location>
        <begin position="770"/>
        <end position="776"/>
    </location>
</feature>
<feature type="helix" evidence="22">
    <location>
        <begin position="778"/>
        <end position="780"/>
    </location>
</feature>
<feature type="helix" evidence="22">
    <location>
        <begin position="784"/>
        <end position="787"/>
    </location>
</feature>
<feature type="strand" evidence="22">
    <location>
        <begin position="789"/>
        <end position="793"/>
    </location>
</feature>
<feature type="helix" evidence="22">
    <location>
        <begin position="794"/>
        <end position="796"/>
    </location>
</feature>
<feature type="helix" evidence="26">
    <location>
        <begin position="801"/>
        <end position="803"/>
    </location>
</feature>
<feature type="helix" evidence="21">
    <location>
        <begin position="804"/>
        <end position="807"/>
    </location>
</feature>
<keyword id="KW-0002">3D-structure</keyword>
<keyword id="KW-1003">Cell membrane</keyword>
<keyword id="KW-0963">Cytoplasm</keyword>
<keyword id="KW-0968">Cytoplasmic vesicle</keyword>
<keyword id="KW-1015">Disulfide bond</keyword>
<keyword id="KW-0256">Endoplasmic reticulum</keyword>
<keyword id="KW-0967">Endosome</keyword>
<keyword id="KW-0325">Glycoprotein</keyword>
<keyword id="KW-0391">Immunity</keyword>
<keyword id="KW-0395">Inflammatory response</keyword>
<keyword id="KW-0399">Innate immunity</keyword>
<keyword id="KW-0433">Leucine-rich repeat</keyword>
<keyword id="KW-0449">Lipoprotein</keyword>
<keyword id="KW-0458">Lysosome</keyword>
<keyword id="KW-0472">Membrane</keyword>
<keyword id="KW-0539">Nucleus</keyword>
<keyword id="KW-0564">Palmitate</keyword>
<keyword id="KW-0675">Receptor</keyword>
<keyword id="KW-1185">Reference proteome</keyword>
<keyword id="KW-0677">Repeat</keyword>
<keyword id="KW-0732">Signal</keyword>
<keyword id="KW-0812">Transmembrane</keyword>
<keyword id="KW-1133">Transmembrane helix</keyword>
<comment type="function">
    <text evidence="2 13">Key component of innate and adaptive immunity. TLRs (Toll-like receptors) control host immune response against pathogens through recognition of molecular patterns specific to microorganisms. TLR9 is a nucleotide-sensing TLR which is activated by unmethylated cytidine-phosphate-guanosine (CpG) dinucleotides. Acts via MYD88 and TRAF6, leading to NF-kappa-B activation, cytokine secretion and the inflammatory response. Upon CpG stimulation, induces B-cell proliferation, activation, survival and antibody production (By similarity).</text>
</comment>
<comment type="subunit">
    <text evidence="1 2 13">Monomer and homodimer. Exists as a monomer in the absence of unmethylated cytidine-phosphate-guanosine (CpG) ligand. Proteolytic processing of an insertion loop (Z-loop) is required for homodimerization upon binding to the unmethylated CpG ligand leading to its activation (PubMed:25686612). Interacts with MYD88 via their respective TIR domains (By similarity). Interacts with BTK (By similarity). Interacts (via transmembrane domain) with UNC93B1. Interacts with CD300LH; the interaction may promote full activation of TLR9-triggered innate responses. Interacts with CNPY3 and HSP90B1; this interaction is required for proper folding in the endoplasmic reticulum. Interacts with SMPDL3B (By similarity). Interacts with CD82; this interaction is essential for TLR9-dependent myddosome formation in response to CpG stimulation (By similarity).</text>
</comment>
<comment type="interaction">
    <interactant intactId="EBI-16145055">
        <id>Q2EEY0</id>
    </interactant>
    <interactant intactId="EBI-16145055">
        <id>Q2EEY0</id>
        <label>TLR9</label>
    </interactant>
    <organismsDiffer>false</organismsDiffer>
    <experiments>2</experiments>
</comment>
<comment type="subcellular location">
    <subcellularLocation>
        <location evidence="1">Endoplasmic reticulum membrane</location>
        <topology evidence="1">Single-pass type I membrane protein</topology>
    </subcellularLocation>
    <subcellularLocation>
        <location evidence="1">Endosome</location>
    </subcellularLocation>
    <subcellularLocation>
        <location evidence="1">Lysosome</location>
    </subcellularLocation>
    <subcellularLocation>
        <location evidence="1">Cytoplasmic vesicle</location>
    </subcellularLocation>
    <subcellularLocation>
        <location evidence="1">Cytoplasmic vesicle</location>
        <location evidence="1">Phagosome</location>
    </subcellularLocation>
    <subcellularLocation>
        <location evidence="7">Cell membrane</location>
    </subcellularLocation>
    <subcellularLocation>
        <location evidence="7">Cytoplasm</location>
    </subcellularLocation>
    <subcellularLocation>
        <location evidence="7">Nucleus</location>
    </subcellularLocation>
    <text evidence="1">Relocalizes from endoplasmic reticulum to endosome and lysosome upon stimulation with agonist. Exit from the ER requires UNC93B1. Endolysosomal localization is required for proteolytic cleavage and subsequent activation. Intracellular localization of the active receptor may prevent from responding to self nucleic acid.</text>
</comment>
<comment type="tissue specificity">
    <text evidence="6 7 9 14">Expressed in airway epithelium, vascular endothelium and inflammatory cells in blood vessels of the lungs (at protein level). Highly expressed in pulmonary intravascular macrophages (PIMs) and to a lesser extent in alveolar macrophages, neutrophiles, type-II alveolar epithelial cells and bronchial epithelial cells of the lungs (at protein level) (PubMed:19548205). High constitutive intracellular expression in leukocytes including polymorphonuclear leukocytes (PMNs), CD4 and CD8 T cells (at protein level) (PubMed:18462806). Expressed throughout the respiratory tract including larynx, upper, middle and lower trachea, and bronchus in isolated equine respiratory epithelial cells (ERECs) and in fully differentiated ERECs cultured at the air-fluid interface (AFI) (at protein level) (PubMed:21292331). Constitutively expressed in peripheral blood mononuclear cells (PBMCs), lymph nodes and spleen. The level of expression in PBMCs is about 2- to 3-fold higher than that in lymph nodes and spleen. Very low expression in liver, heart, lung, kidney, small intestine, colon and stomach (PubMed:18462806). Low expression in the airway tissue epithelium of the larynx, upper trachea, middle tranchea, lower trachea, bronchus and spleen, and more abundant expression in mesenteric lymph node. Not expressed in fully differentiated bronchus epithelial cells cultured at the AFI for four weeks (PubMed:21292331). Expressed in gingival tissue (PubMed:27270960).</text>
</comment>
<comment type="developmental stage">
    <text evidence="8 10">Expression increases with age in neutrophils of an individual foal aged between 2 to 56 days (PubMed:22197007). Expression in neutrophils of a foal at age 1 day, another different foal at age 56 days, and of an adult horse is constitutive at a very low level (PubMed:19819162).</text>
</comment>
<comment type="induction">
    <text evidence="6 7 8 10 11 12 14">By mitogen phytohaemagglutinin (PHA) in peripheral blood mononuclear cells (PBMCs) (PubMed:18462806). By lipopolysaccharide (LPS) in cells of the lung septa. This induction is abolished by gadolinium chloride treatment which depletes pulmonary intravascular macrophages (PIMs) (PubMed:19548205). By synthetic class C cytidine-phosphate-guanosine oligodeoxynucleotides (CpG-ODNs) in PBMCs (PubMed:25066759). Synthetic class B CpG-ODN does not induce a significant increase of expression in vitro in neutrophils of foals aged between 2 to 56 days nor in adult horses (PubMed:19819162, PubMed:22197007). Expression level in neutrophils is not significantly changed by virulent strain of R.equi bacterium (PubMed:19819162). Up-regulated by neuropathogenic equine herpesvirus-1 (EHV-1) infection in fully differentiated equine respiratory epithelial cells (ERECs) cultured at the air-fluid interface (AFI) (PubMed:24560592). Up-regulated in gingival tissue in individuals with equine periodontal disease. 16-fold increase in expression at diseased sites of the gums compared to healthy sites of the same animal (PubMed:27270960).</text>
</comment>
<comment type="PTM">
    <text evidence="1">Activated by proteolytic cleavage of the flexible loop between repeats LRR14 and LRR15 within the ectodomain. Cleavage requires UNC93B1. Proteolytically processed by first removing the majority of the ectodomain by either asparagine endopeptidase (AEP) or a cathepsin followed by a trimming event that is solely cathepsin mediated and required for optimal receptor signaling.</text>
</comment>
<comment type="PTM">
    <text evidence="2">Palmitoylated by ZDHHC3 in the Golgi regulates TLR9 trafficking from the Golgi to endosomes. Depalmitoylation by PPT1 controls the release of TLR9 from UNC93B1 in endosomes.</text>
</comment>
<comment type="similarity">
    <text evidence="16">Belongs to the Toll-like receptor family.</text>
</comment>
<reference evidence="17" key="1">
    <citation type="journal article" date="2008" name="Vet. Immunol. Immunopathol.">
        <title>Molecular cloning and characterization of equine Toll-like receptor 9.</title>
        <authorList>
            <person name="Zhang Y.W."/>
            <person name="Davis E.G."/>
            <person name="Blecha F."/>
            <person name="Wilkerson M.J."/>
        </authorList>
    </citation>
    <scope>NUCLEOTIDE SEQUENCE [MRNA]</scope>
    <scope>TISSUE SPECIFICITY</scope>
    <scope>INDUCTION</scope>
    <scope>PHYLOGENETIC ANALYSIS</scope>
</reference>
<reference key="2">
    <citation type="journal article" date="2009" name="Science">
        <title>Genome sequence, comparative analysis, and population genetics of the domestic horse.</title>
        <authorList>
            <person name="Wade C.M."/>
            <person name="Giulotto E."/>
            <person name="Sigurdsson S."/>
            <person name="Zoli M."/>
            <person name="Gnerre S."/>
            <person name="Imsland F."/>
            <person name="Lear T.L."/>
            <person name="Adelson D.L."/>
            <person name="Bailey E."/>
            <person name="Bellone R.R."/>
            <person name="Bloecker H."/>
            <person name="Distl O."/>
            <person name="Edgar R.C."/>
            <person name="Garber M."/>
            <person name="Leeb T."/>
            <person name="Mauceli E."/>
            <person name="MacLeod J.N."/>
            <person name="Penedo M.C.T."/>
            <person name="Raison J.M."/>
            <person name="Sharpe T."/>
            <person name="Vogel J."/>
            <person name="Andersson L."/>
            <person name="Antczak D.F."/>
            <person name="Biagi T."/>
            <person name="Binns M.M."/>
            <person name="Chowdhary B.P."/>
            <person name="Coleman S.J."/>
            <person name="Della Valle G."/>
            <person name="Fryc S."/>
            <person name="Guerin G."/>
            <person name="Hasegawa T."/>
            <person name="Hill E.W."/>
            <person name="Jurka J."/>
            <person name="Kiialainen A."/>
            <person name="Lindgren G."/>
            <person name="Liu J."/>
            <person name="Magnani E."/>
            <person name="Mickelson J.R."/>
            <person name="Murray J."/>
            <person name="Nergadze S.G."/>
            <person name="Onofrio R."/>
            <person name="Pedroni S."/>
            <person name="Piras M.F."/>
            <person name="Raudsepp T."/>
            <person name="Rocchi M."/>
            <person name="Roeed K.H."/>
            <person name="Ryder O.A."/>
            <person name="Searle S."/>
            <person name="Skow L."/>
            <person name="Swinburne J.E."/>
            <person name="Syvaenen A.C."/>
            <person name="Tozaki T."/>
            <person name="Valberg S.J."/>
            <person name="Vaudin M."/>
            <person name="White J.R."/>
            <person name="Zody M.C."/>
            <person name="Lander E.S."/>
            <person name="Lindblad-Toh K."/>
        </authorList>
    </citation>
    <scope>NUCLEOTIDE SEQUENCE [LARGE SCALE GENOMIC DNA]</scope>
    <source>
        <strain>Thoroughbred</strain>
    </source>
</reference>
<reference key="3">
    <citation type="journal article" date="2009" name="Anat. Rec. (Hoboken)">
        <title>Expression of toll-like receptor 9 in horse lungs.</title>
        <authorList>
            <person name="Schneberger D."/>
            <person name="Caldwell S."/>
            <person name="Suri S.S."/>
            <person name="Singh B."/>
        </authorList>
    </citation>
    <scope>SUBCELLULAR LOCATION</scope>
    <scope>TISSUE SPECIFICITY</scope>
    <scope>INDUCTION</scope>
</reference>
<reference key="4">
    <citation type="journal article" date="2009" name="Cytokine">
        <title>Activation of foal neutrophils at different ages by CpG oligodeoxynucleotides and Rhodococcus equi.</title>
        <authorList>
            <person name="Liu M."/>
            <person name="Liu T."/>
            <person name="Bordin A."/>
            <person name="Nerren J."/>
            <person name="Cohen N."/>
        </authorList>
    </citation>
    <scope>DEVELOPMENTAL STAGE</scope>
    <scope>INDUCTION</scope>
</reference>
<reference key="5">
    <citation type="journal article" date="2011" name="Vet. Immunol. Immunopathol.">
        <title>Immunological characterization of the equine airway epithelium and of a primary equine airway epithelial cell culture model.</title>
        <authorList>
            <person name="Quintana A.M."/>
            <person name="Landolt G.A."/>
            <person name="Annis K.M."/>
            <person name="Hussey G.S."/>
        </authorList>
    </citation>
    <scope>TISSUE SPECIFICITY</scope>
</reference>
<reference key="6">
    <citation type="journal article" date="2012" name="Vet. Immunol. Immunopathol.">
        <title>Neutrophil function of neonatal foals is enhanced in vitro by CpG oligodeoxynucleotide stimulation.</title>
        <authorList>
            <person name="Bordin A.I."/>
            <person name="Liu M."/>
            <person name="Nerren J.R."/>
            <person name="Buntain S.L."/>
            <person name="Brake C.N."/>
            <person name="Kogut M.H."/>
            <person name="Cohen N.D."/>
        </authorList>
    </citation>
    <scope>DEVELOPMENTAL STAGE</scope>
    <scope>INDUCTION</scope>
</reference>
<reference key="7">
    <citation type="journal article" date="2014" name="Int. Immunopharmacol.">
        <title>CpG-ODN class C-mediated immunostimulation and its potential against Trypanosoma evansi in equines.</title>
        <authorList>
            <person name="Manuja A."/>
            <person name="Kumar P."/>
            <person name="Kumar R."/>
            <person name="Kumar B."/>
            <person name="Singha H."/>
            <person name="Sharma R.K."/>
            <person name="Yadav S.C."/>
        </authorList>
    </citation>
    <scope>INDUCTION</scope>
</reference>
<reference key="8">
    <citation type="journal article" date="2014" name="Vet. Microbiol.">
        <title>Innate immune responses of airway epithelial cells to infection with equine herpesvirus-1.</title>
        <authorList>
            <person name="Soboll Hussey G."/>
            <person name="Ashton L.V."/>
            <person name="Quintana A.M."/>
            <person name="Lunn D.P."/>
            <person name="Goehring L.S."/>
            <person name="Annis K."/>
            <person name="Landolt G."/>
        </authorList>
    </citation>
    <scope>INDUCTION</scope>
</reference>
<reference key="9">
    <citation type="journal article" date="2017" name="Equine Vet. J.">
        <title>Gingival Toll-like receptor and cytokine messenger RNA levels in equine periodontitis and oral health.</title>
        <authorList>
            <person name="Kennedy R."/>
            <person name="Lappin D.F."/>
            <person name="Dixon P.M."/>
            <person name="Bennett D."/>
            <person name="Riggio M.P."/>
        </authorList>
    </citation>
    <scope>TISSUE SPECIFICITY</scope>
    <scope>INDUCTION</scope>
</reference>
<reference evidence="18 19 20" key="10">
    <citation type="journal article" date="2015" name="Nature">
        <title>Structural basis of CpG and inhibitory DNA recognition by Toll-like receptor 9.</title>
        <authorList>
            <person name="Ohto U."/>
            <person name="Shibata T."/>
            <person name="Tanji H."/>
            <person name="Ishida H."/>
            <person name="Krayukhina E."/>
            <person name="Uchiyama S."/>
            <person name="Miyake K."/>
            <person name="Shimizu T."/>
        </authorList>
    </citation>
    <scope>X-RAY CRYSTALLOGRAPHY (1.60 ANGSTROMS) OF 26-817 OF UNLIGANDED AND IN COMPLEX WITH AGONIST CPG-DNA AND INHIBITORY DNA</scope>
    <scope>FUNCTION</scope>
    <scope>SUBUNIT</scope>
    <scope>GLYCOSYLATION AT ASN-200; ASN-210; ASN-242; ASN-309; ASN-513; ASN-567; ASN-694 AND ASN-731</scope>
    <scope>DISULFIDE BONDS</scope>
    <scope>MUTAGENESIS OF TRP-47; TRP-96 AND PHE-108</scope>
</reference>
<protein>
    <recommendedName>
        <fullName evidence="15 17">Toll-like receptor 9</fullName>
    </recommendedName>
    <cdAntigenName evidence="16">CD289</cdAntigenName>
</protein>
<sequence>MGPCHGALQPLSLLVQAAMLAVALAQGTLPPFLPCELQPHGLVNCNWLFLKSVPHFSAAAPRDNVTSLSLLSNRIHHLHDSDFAQLSNLQKLNLKWNCPPAGLSPMHFPCHMTIEPNTFLAVPTLEELNLSYNGITTVPALPSSLVSLILSRTNILQLDPTSLTGLHALRFLYMDGNCYYKNPCGRALEVAPGALLGLGNLTHLSLKYNNLTTVPRSLPPSLEYLLLSYNHIVTLAPEDLANLTALRVLDVGGNCRRCDHARNPCVECPHKFPQLHSDTFSHLSRLEGLVLKDSSLYQLNPRWFRGLGNLTVLDLSENFLYDCITKTKAFQGLAQLRRLNLSFNYHKKVSFAHLTLAPSFGSLLSLQELDMHGIFFRSLSQKTLQPLARLPMLQRLYLQMNFINQAQLGIFKDFPGLRYIDLSDNRISGAVEPVATTGEVDGGKKVWLTSRDLTPGPLDTPSSEDFMPSCKNLSFTLDLSRNNLVTVQPEMFAQLSRLQCLRLSHNSISQAVNGSQFVPLTSLQVLDLSHNKLDLYHGRSFTELPRLEALDLSYNSQPFSMRGVGHNLSFVAQLPTLRYLSLAHNGIHSRVSQQLCSTSLWALDFSGNSLSQMWAEGDLYLRFFQGLRSLIRLDLSQNRLHTLLPCTLGNLPKSLQLLRLRNNYLAFFNWSSLTLLPNLETLDLAGNQLKALSNGSLPSGTQLQRLDVSRNSIIFVVPGFFALATRLRELNLSANALRTVEPSWFGFLAGSLEVLDVSANPLHCACGAAFVDFLLQVQAAVPGLPSRVKCGSPGQLQGRSIFAQDLRLCLDESLSWDCFGLSLLVVALGLAMPMLHHLCGWDLWYCFHLGLAWLPRRGWQRGADALSYDAFVVFDKAQSAVADWVYNELRVRLEERRGRRALRLCLEERDWLPGKTLFENLWASVYSSRKMLFVLAHTDQVSGLLRASFLLAQQRLLEDRKDVVVLVILSPDARRSRYVRLRQRLCRQSVLFWPHQPSGQRSFWAQLGMALTRDNRHFYNQNFCRGPTMAE</sequence>
<evidence type="ECO:0000250" key="1">
    <source>
        <dbReference type="UniProtKB" id="Q9EQU3"/>
    </source>
</evidence>
<evidence type="ECO:0000250" key="2">
    <source>
        <dbReference type="UniProtKB" id="Q9NR96"/>
    </source>
</evidence>
<evidence type="ECO:0000255" key="3"/>
<evidence type="ECO:0000255" key="4">
    <source>
        <dbReference type="PROSITE-ProRule" id="PRU00204"/>
    </source>
</evidence>
<evidence type="ECO:0000255" key="5">
    <source>
        <dbReference type="PROSITE-ProRule" id="PRU00498"/>
    </source>
</evidence>
<evidence type="ECO:0000269" key="6">
    <source>
    </source>
</evidence>
<evidence type="ECO:0000269" key="7">
    <source>
    </source>
</evidence>
<evidence type="ECO:0000269" key="8">
    <source>
    </source>
</evidence>
<evidence type="ECO:0000269" key="9">
    <source>
    </source>
</evidence>
<evidence type="ECO:0000269" key="10">
    <source>
    </source>
</evidence>
<evidence type="ECO:0000269" key="11">
    <source>
    </source>
</evidence>
<evidence type="ECO:0000269" key="12">
    <source>
    </source>
</evidence>
<evidence type="ECO:0000269" key="13">
    <source>
    </source>
</evidence>
<evidence type="ECO:0000269" key="14">
    <source>
    </source>
</evidence>
<evidence type="ECO:0000303" key="15">
    <source>
    </source>
</evidence>
<evidence type="ECO:0000305" key="16"/>
<evidence type="ECO:0000312" key="17">
    <source>
        <dbReference type="EMBL" id="ABD36388.2"/>
    </source>
</evidence>
<evidence type="ECO:0007744" key="18">
    <source>
        <dbReference type="PDB" id="3WPB"/>
    </source>
</evidence>
<evidence type="ECO:0007744" key="19">
    <source>
        <dbReference type="PDB" id="3WPC"/>
    </source>
</evidence>
<evidence type="ECO:0007744" key="20">
    <source>
        <dbReference type="PDB" id="3WPD"/>
    </source>
</evidence>
<evidence type="ECO:0007829" key="21">
    <source>
        <dbReference type="PDB" id="3WPB"/>
    </source>
</evidence>
<evidence type="ECO:0007829" key="22">
    <source>
        <dbReference type="PDB" id="3WPC"/>
    </source>
</evidence>
<evidence type="ECO:0007829" key="23">
    <source>
        <dbReference type="PDB" id="3WPD"/>
    </source>
</evidence>
<evidence type="ECO:0007829" key="24">
    <source>
        <dbReference type="PDB" id="5Y3J"/>
    </source>
</evidence>
<evidence type="ECO:0007829" key="25">
    <source>
        <dbReference type="PDB" id="5Y3K"/>
    </source>
</evidence>
<evidence type="ECO:0007829" key="26">
    <source>
        <dbReference type="PDB" id="5Y3L"/>
    </source>
</evidence>
<dbReference type="EMBL" id="DQ390541">
    <property type="protein sequence ID" value="ABD36388.2"/>
    <property type="molecule type" value="mRNA"/>
</dbReference>
<dbReference type="EMBL" id="AAWR02008456">
    <property type="status" value="NOT_ANNOTATED_CDS"/>
    <property type="molecule type" value="Genomic_DNA"/>
</dbReference>
<dbReference type="RefSeq" id="NP_001075259.1">
    <property type="nucleotide sequence ID" value="NM_001081790.2"/>
</dbReference>
<dbReference type="PDB" id="3WPB">
    <property type="method" value="X-ray"/>
    <property type="resolution" value="2.40 A"/>
    <property type="chains" value="A=26-817"/>
</dbReference>
<dbReference type="PDB" id="3WPC">
    <property type="method" value="X-ray"/>
    <property type="resolution" value="1.60 A"/>
    <property type="chains" value="A/B=26-817"/>
</dbReference>
<dbReference type="PDB" id="3WPD">
    <property type="method" value="X-ray"/>
    <property type="resolution" value="2.75 A"/>
    <property type="chains" value="A=26-817"/>
</dbReference>
<dbReference type="PDB" id="5Y3J">
    <property type="method" value="X-ray"/>
    <property type="resolution" value="1.81 A"/>
    <property type="chains" value="A/B=26-819"/>
</dbReference>
<dbReference type="PDB" id="5Y3K">
    <property type="method" value="X-ray"/>
    <property type="resolution" value="2.70 A"/>
    <property type="chains" value="A/B=26-819"/>
</dbReference>
<dbReference type="PDB" id="5Y3L">
    <property type="method" value="X-ray"/>
    <property type="resolution" value="2.60 A"/>
    <property type="chains" value="A/B=26-819"/>
</dbReference>
<dbReference type="PDBsum" id="3WPB"/>
<dbReference type="PDBsum" id="3WPC"/>
<dbReference type="PDBsum" id="3WPD"/>
<dbReference type="PDBsum" id="5Y3J"/>
<dbReference type="PDBsum" id="5Y3K"/>
<dbReference type="PDBsum" id="5Y3L"/>
<dbReference type="SMR" id="Q2EEY0"/>
<dbReference type="DIP" id="DIP-61513N"/>
<dbReference type="FunCoup" id="Q2EEY0">
    <property type="interactions" value="73"/>
</dbReference>
<dbReference type="STRING" id="9796.ENSECAP00000011919"/>
<dbReference type="GlyCosmos" id="Q2EEY0">
    <property type="glycosylation" value="13 sites, No reported glycans"/>
</dbReference>
<dbReference type="iPTMnet" id="Q2EEY0"/>
<dbReference type="PaxDb" id="9796-ENSECAP00000011919"/>
<dbReference type="GeneID" id="100009693"/>
<dbReference type="KEGG" id="ecb:100009693"/>
<dbReference type="CTD" id="54106"/>
<dbReference type="HOGENOM" id="CLU_006000_2_0_1"/>
<dbReference type="InParanoid" id="Q2EEY0"/>
<dbReference type="OMA" id="YNQNFCR"/>
<dbReference type="OrthoDB" id="10006997at2759"/>
<dbReference type="TreeFam" id="TF325595"/>
<dbReference type="EvolutionaryTrace" id="Q2EEY0"/>
<dbReference type="Proteomes" id="UP000002281">
    <property type="component" value="Chromosome 16"/>
</dbReference>
<dbReference type="Bgee" id="ENSECAG00000014294">
    <property type="expression patterns" value="Expressed in blood and 8 other cell types or tissues"/>
</dbReference>
<dbReference type="GO" id="GO:0005737">
    <property type="term" value="C:cytoplasm"/>
    <property type="evidence" value="ECO:0000314"/>
    <property type="project" value="UniProtKB"/>
</dbReference>
<dbReference type="GO" id="GO:0036019">
    <property type="term" value="C:endolysosome"/>
    <property type="evidence" value="ECO:0000250"/>
    <property type="project" value="UniProtKB"/>
</dbReference>
<dbReference type="GO" id="GO:0005789">
    <property type="term" value="C:endoplasmic reticulum membrane"/>
    <property type="evidence" value="ECO:0007669"/>
    <property type="project" value="UniProtKB-SubCell"/>
</dbReference>
<dbReference type="GO" id="GO:0005764">
    <property type="term" value="C:lysosome"/>
    <property type="evidence" value="ECO:0000250"/>
    <property type="project" value="UniProtKB"/>
</dbReference>
<dbReference type="GO" id="GO:0005634">
    <property type="term" value="C:nucleus"/>
    <property type="evidence" value="ECO:0007669"/>
    <property type="project" value="UniProtKB-SubCell"/>
</dbReference>
<dbReference type="GO" id="GO:0045335">
    <property type="term" value="C:phagocytic vesicle"/>
    <property type="evidence" value="ECO:0000250"/>
    <property type="project" value="UniProtKB"/>
</dbReference>
<dbReference type="GO" id="GO:0005886">
    <property type="term" value="C:plasma membrane"/>
    <property type="evidence" value="ECO:0000314"/>
    <property type="project" value="UniProtKB"/>
</dbReference>
<dbReference type="GO" id="GO:0042802">
    <property type="term" value="F:identical protein binding"/>
    <property type="evidence" value="ECO:0000353"/>
    <property type="project" value="IntAct"/>
</dbReference>
<dbReference type="GO" id="GO:0038187">
    <property type="term" value="F:pattern recognition receptor activity"/>
    <property type="evidence" value="ECO:0000314"/>
    <property type="project" value="UniProtKB"/>
</dbReference>
<dbReference type="GO" id="GO:0042803">
    <property type="term" value="F:protein homodimerization activity"/>
    <property type="evidence" value="ECO:0000314"/>
    <property type="project" value="UniProtKB"/>
</dbReference>
<dbReference type="GO" id="GO:0035197">
    <property type="term" value="F:siRNA binding"/>
    <property type="evidence" value="ECO:0000250"/>
    <property type="project" value="UniProtKB"/>
</dbReference>
<dbReference type="GO" id="GO:0045322">
    <property type="term" value="F:unmethylated CpG binding"/>
    <property type="evidence" value="ECO:0000314"/>
    <property type="project" value="UniProtKB"/>
</dbReference>
<dbReference type="GO" id="GO:0002218">
    <property type="term" value="P:activation of innate immune response"/>
    <property type="evidence" value="ECO:0000314"/>
    <property type="project" value="UniProtKB"/>
</dbReference>
<dbReference type="GO" id="GO:0007249">
    <property type="term" value="P:canonical NF-kappaB signal transduction"/>
    <property type="evidence" value="ECO:0000318"/>
    <property type="project" value="GO_Central"/>
</dbReference>
<dbReference type="GO" id="GO:0051607">
    <property type="term" value="P:defense response to virus"/>
    <property type="evidence" value="ECO:0000318"/>
    <property type="project" value="GO_Central"/>
</dbReference>
<dbReference type="GO" id="GO:0006954">
    <property type="term" value="P:inflammatory response"/>
    <property type="evidence" value="ECO:0007669"/>
    <property type="project" value="UniProtKB-KW"/>
</dbReference>
<dbReference type="GO" id="GO:0045087">
    <property type="term" value="P:innate immune response"/>
    <property type="evidence" value="ECO:0007669"/>
    <property type="project" value="UniProtKB-KW"/>
</dbReference>
<dbReference type="GO" id="GO:0050871">
    <property type="term" value="P:positive regulation of B cell activation"/>
    <property type="evidence" value="ECO:0000250"/>
    <property type="project" value="UniProtKB"/>
</dbReference>
<dbReference type="GO" id="GO:0030890">
    <property type="term" value="P:positive regulation of B cell proliferation"/>
    <property type="evidence" value="ECO:0000250"/>
    <property type="project" value="UniProtKB"/>
</dbReference>
<dbReference type="GO" id="GO:0002639">
    <property type="term" value="P:positive regulation of immunoglobulin production"/>
    <property type="evidence" value="ECO:0000250"/>
    <property type="project" value="UniProtKB"/>
</dbReference>
<dbReference type="GO" id="GO:0032727">
    <property type="term" value="P:positive regulation of interferon-alpha production"/>
    <property type="evidence" value="ECO:0000250"/>
    <property type="project" value="UniProtKB"/>
</dbReference>
<dbReference type="GO" id="GO:0032728">
    <property type="term" value="P:positive regulation of interferon-beta production"/>
    <property type="evidence" value="ECO:0000250"/>
    <property type="project" value="UniProtKB"/>
</dbReference>
<dbReference type="GO" id="GO:0032755">
    <property type="term" value="P:positive regulation of interleukin-6 production"/>
    <property type="evidence" value="ECO:0000318"/>
    <property type="project" value="GO_Central"/>
</dbReference>
<dbReference type="GO" id="GO:0043410">
    <property type="term" value="P:positive regulation of MAPK cascade"/>
    <property type="evidence" value="ECO:0000250"/>
    <property type="project" value="UniProtKB"/>
</dbReference>
<dbReference type="GO" id="GO:0034165">
    <property type="term" value="P:positive regulation of toll-like receptor 9 signaling pathway"/>
    <property type="evidence" value="ECO:0000314"/>
    <property type="project" value="UniProtKB"/>
</dbReference>
<dbReference type="GO" id="GO:0032729">
    <property type="term" value="P:positive regulation of type II interferon production"/>
    <property type="evidence" value="ECO:0000250"/>
    <property type="project" value="UniProtKB"/>
</dbReference>
<dbReference type="GO" id="GO:0045577">
    <property type="term" value="P:regulation of B cell differentiation"/>
    <property type="evidence" value="ECO:0000250"/>
    <property type="project" value="UniProtKB"/>
</dbReference>
<dbReference type="GO" id="GO:0002224">
    <property type="term" value="P:toll-like receptor signaling pathway"/>
    <property type="evidence" value="ECO:0000318"/>
    <property type="project" value="GO_Central"/>
</dbReference>
<dbReference type="FunFam" id="3.40.50.10140:FF:000003">
    <property type="entry name" value="Toll-like receptor 7"/>
    <property type="match status" value="1"/>
</dbReference>
<dbReference type="FunFam" id="3.80.10.10:FF:000037">
    <property type="entry name" value="Toll-like receptor 7"/>
    <property type="match status" value="1"/>
</dbReference>
<dbReference type="Gene3D" id="3.80.10.10">
    <property type="entry name" value="Ribonuclease Inhibitor"/>
    <property type="match status" value="1"/>
</dbReference>
<dbReference type="Gene3D" id="3.40.50.10140">
    <property type="entry name" value="Toll/interleukin-1 receptor homology (TIR) domain"/>
    <property type="match status" value="1"/>
</dbReference>
<dbReference type="InterPro" id="IPR001611">
    <property type="entry name" value="Leu-rich_rpt"/>
</dbReference>
<dbReference type="InterPro" id="IPR003591">
    <property type="entry name" value="Leu-rich_rpt_typical-subtyp"/>
</dbReference>
<dbReference type="InterPro" id="IPR041283">
    <property type="entry name" value="LRR_12"/>
</dbReference>
<dbReference type="InterPro" id="IPR032675">
    <property type="entry name" value="LRR_dom_sf"/>
</dbReference>
<dbReference type="InterPro" id="IPR000157">
    <property type="entry name" value="TIR_dom"/>
</dbReference>
<dbReference type="InterPro" id="IPR035897">
    <property type="entry name" value="Toll_tir_struct_dom_sf"/>
</dbReference>
<dbReference type="PANTHER" id="PTHR47410">
    <property type="entry name" value="TOLL-LIKE RECEPTOR 7-RELATED"/>
    <property type="match status" value="1"/>
</dbReference>
<dbReference type="PANTHER" id="PTHR47410:SF3">
    <property type="entry name" value="TOLL-LIKE RECEPTOR 9"/>
    <property type="match status" value="1"/>
</dbReference>
<dbReference type="Pfam" id="PF00560">
    <property type="entry name" value="LRR_1"/>
    <property type="match status" value="2"/>
</dbReference>
<dbReference type="Pfam" id="PF18837">
    <property type="entry name" value="LRR_12"/>
    <property type="match status" value="1"/>
</dbReference>
<dbReference type="Pfam" id="PF13516">
    <property type="entry name" value="LRR_6"/>
    <property type="match status" value="1"/>
</dbReference>
<dbReference type="Pfam" id="PF13855">
    <property type="entry name" value="LRR_8"/>
    <property type="match status" value="4"/>
</dbReference>
<dbReference type="Pfam" id="PF01582">
    <property type="entry name" value="TIR"/>
    <property type="match status" value="1"/>
</dbReference>
<dbReference type="PRINTS" id="PR00019">
    <property type="entry name" value="LEURICHRPT"/>
</dbReference>
<dbReference type="SMART" id="SM00364">
    <property type="entry name" value="LRR_BAC"/>
    <property type="match status" value="4"/>
</dbReference>
<dbReference type="SMART" id="SM00365">
    <property type="entry name" value="LRR_SD22"/>
    <property type="match status" value="5"/>
</dbReference>
<dbReference type="SMART" id="SM00369">
    <property type="entry name" value="LRR_TYP"/>
    <property type="match status" value="16"/>
</dbReference>
<dbReference type="SMART" id="SM00255">
    <property type="entry name" value="TIR"/>
    <property type="match status" value="1"/>
</dbReference>
<dbReference type="SUPFAM" id="SSF52058">
    <property type="entry name" value="L domain-like"/>
    <property type="match status" value="3"/>
</dbReference>
<dbReference type="SUPFAM" id="SSF52200">
    <property type="entry name" value="Toll/Interleukin receptor TIR domain"/>
    <property type="match status" value="1"/>
</dbReference>
<dbReference type="PROSITE" id="PS51450">
    <property type="entry name" value="LRR"/>
    <property type="match status" value="18"/>
</dbReference>
<dbReference type="PROSITE" id="PS50104">
    <property type="entry name" value="TIR"/>
    <property type="match status" value="1"/>
</dbReference>
<accession>Q2EEY0</accession>